<accession>Q8KA21</accession>
<protein>
    <recommendedName>
        <fullName evidence="1">Ion-translocating oxidoreductase complex subunit A</fullName>
        <ecNumber evidence="1">7.-.-.-</ecNumber>
    </recommendedName>
    <alternativeName>
        <fullName evidence="1">Rnf electron transport complex subunit A</fullName>
    </alternativeName>
</protein>
<name>RNFA_BUCAP</name>
<evidence type="ECO:0000255" key="1">
    <source>
        <dbReference type="HAMAP-Rule" id="MF_00459"/>
    </source>
</evidence>
<sequence length="193" mass="21684">MKSYFFFILSNILIDNFILVKFLGLCPFIGASNQIKQAFGISFATSFVVVVSTVLLWFVNFFILLPFDLVYLRIIVYMLIISFGVQLIEIILRGTSPILYRILGIFLPLITTNCAVLAIPLFSLYLNHTFLESILYAVSASFGFTLVMVIFSSIRERILLSDVPLAFQGSPIVLITVSLISIVFMGFKGLVRI</sequence>
<organism>
    <name type="scientific">Buchnera aphidicola subsp. Schizaphis graminum (strain Sg)</name>
    <dbReference type="NCBI Taxonomy" id="198804"/>
    <lineage>
        <taxon>Bacteria</taxon>
        <taxon>Pseudomonadati</taxon>
        <taxon>Pseudomonadota</taxon>
        <taxon>Gammaproteobacteria</taxon>
        <taxon>Enterobacterales</taxon>
        <taxon>Erwiniaceae</taxon>
        <taxon>Buchnera</taxon>
    </lineage>
</organism>
<comment type="function">
    <text evidence="1">Part of a membrane-bound complex that couples electron transfer with translocation of ions across the membrane.</text>
</comment>
<comment type="subunit">
    <text evidence="1">The complex is composed of six subunits: RnfA, RnfB, RnfC, RnfD, RnfE and RnfG.</text>
</comment>
<comment type="subcellular location">
    <subcellularLocation>
        <location evidence="1">Cell inner membrane</location>
        <topology evidence="1">Multi-pass membrane protein</topology>
    </subcellularLocation>
</comment>
<comment type="similarity">
    <text evidence="1">Belongs to the NqrDE/RnfAE family.</text>
</comment>
<feature type="chain" id="PRO_0000214287" description="Ion-translocating oxidoreductase complex subunit A">
    <location>
        <begin position="1"/>
        <end position="193"/>
    </location>
</feature>
<feature type="transmembrane region" description="Helical" evidence="1">
    <location>
        <begin position="5"/>
        <end position="25"/>
    </location>
</feature>
<feature type="transmembrane region" description="Helical" evidence="1">
    <location>
        <begin position="47"/>
        <end position="67"/>
    </location>
</feature>
<feature type="transmembrane region" description="Helical" evidence="1">
    <location>
        <begin position="72"/>
        <end position="92"/>
    </location>
</feature>
<feature type="transmembrane region" description="Helical" evidence="1">
    <location>
        <begin position="102"/>
        <end position="122"/>
    </location>
</feature>
<feature type="transmembrane region" description="Helical" evidence="1">
    <location>
        <begin position="134"/>
        <end position="154"/>
    </location>
</feature>
<feature type="transmembrane region" description="Helical" evidence="1">
    <location>
        <begin position="171"/>
        <end position="191"/>
    </location>
</feature>
<dbReference type="EC" id="7.-.-.-" evidence="1"/>
<dbReference type="EMBL" id="AE013218">
    <property type="protein sequence ID" value="AAM67675.1"/>
    <property type="molecule type" value="Genomic_DNA"/>
</dbReference>
<dbReference type="RefSeq" id="WP_011053641.1">
    <property type="nucleotide sequence ID" value="NC_004061.1"/>
</dbReference>
<dbReference type="SMR" id="Q8KA21"/>
<dbReference type="STRING" id="198804.BUsg_105"/>
<dbReference type="GeneID" id="93003575"/>
<dbReference type="KEGG" id="bas:BUsg_105"/>
<dbReference type="eggNOG" id="COG4657">
    <property type="taxonomic scope" value="Bacteria"/>
</dbReference>
<dbReference type="HOGENOM" id="CLU_095255_1_0_6"/>
<dbReference type="Proteomes" id="UP000000416">
    <property type="component" value="Chromosome"/>
</dbReference>
<dbReference type="GO" id="GO:0005886">
    <property type="term" value="C:plasma membrane"/>
    <property type="evidence" value="ECO:0007669"/>
    <property type="project" value="UniProtKB-SubCell"/>
</dbReference>
<dbReference type="GO" id="GO:0022900">
    <property type="term" value="P:electron transport chain"/>
    <property type="evidence" value="ECO:0007669"/>
    <property type="project" value="UniProtKB-UniRule"/>
</dbReference>
<dbReference type="HAMAP" id="MF_00459">
    <property type="entry name" value="RsxA_RnfA"/>
    <property type="match status" value="1"/>
</dbReference>
<dbReference type="InterPro" id="IPR011293">
    <property type="entry name" value="Ion_transpt_RnfA/RsxA"/>
</dbReference>
<dbReference type="InterPro" id="IPR003667">
    <property type="entry name" value="NqrDE/RnfAE"/>
</dbReference>
<dbReference type="InterPro" id="IPR050133">
    <property type="entry name" value="NqrDE/RnfAE_oxidrdctase"/>
</dbReference>
<dbReference type="NCBIfam" id="NF003481">
    <property type="entry name" value="PRK05151.1"/>
    <property type="match status" value="1"/>
</dbReference>
<dbReference type="NCBIfam" id="TIGR01943">
    <property type="entry name" value="rnfA"/>
    <property type="match status" value="1"/>
</dbReference>
<dbReference type="PANTHER" id="PTHR30335">
    <property type="entry name" value="INTEGRAL MEMBRANE PROTEIN OF SOXR-REDUCING COMPLEX"/>
    <property type="match status" value="1"/>
</dbReference>
<dbReference type="PANTHER" id="PTHR30335:SF0">
    <property type="entry name" value="ION-TRANSLOCATING OXIDOREDUCTASE COMPLEX SUBUNIT A"/>
    <property type="match status" value="1"/>
</dbReference>
<dbReference type="Pfam" id="PF02508">
    <property type="entry name" value="Rnf-Nqr"/>
    <property type="match status" value="1"/>
</dbReference>
<dbReference type="PIRSF" id="PIRSF006102">
    <property type="entry name" value="NQR_DE"/>
    <property type="match status" value="1"/>
</dbReference>
<reference key="1">
    <citation type="journal article" date="2002" name="Science">
        <title>50 million years of genomic stasis in endosymbiotic bacteria.</title>
        <authorList>
            <person name="Tamas I."/>
            <person name="Klasson L."/>
            <person name="Canbaeck B."/>
            <person name="Naeslund A.K."/>
            <person name="Eriksson A.-S."/>
            <person name="Wernegreen J.J."/>
            <person name="Sandstroem J.P."/>
            <person name="Moran N.A."/>
            <person name="Andersson S.G.E."/>
        </authorList>
    </citation>
    <scope>NUCLEOTIDE SEQUENCE [LARGE SCALE GENOMIC DNA]</scope>
    <source>
        <strain>Sg</strain>
    </source>
</reference>
<keyword id="KW-0997">Cell inner membrane</keyword>
<keyword id="KW-1003">Cell membrane</keyword>
<keyword id="KW-0249">Electron transport</keyword>
<keyword id="KW-0472">Membrane</keyword>
<keyword id="KW-1278">Translocase</keyword>
<keyword id="KW-0812">Transmembrane</keyword>
<keyword id="KW-1133">Transmembrane helix</keyword>
<keyword id="KW-0813">Transport</keyword>
<proteinExistence type="inferred from homology"/>
<gene>
    <name evidence="1" type="primary">rnfA</name>
    <name type="ordered locus">BUsg_105</name>
</gene>